<protein>
    <recommendedName>
        <fullName evidence="1">Tyrosine--tRNA ligase</fullName>
        <ecNumber evidence="1">6.1.1.1</ecNumber>
    </recommendedName>
    <alternativeName>
        <fullName evidence="1">Tyrosyl-tRNA synthetase</fullName>
        <shortName evidence="1">TyrRS</shortName>
    </alternativeName>
</protein>
<evidence type="ECO:0000255" key="1">
    <source>
        <dbReference type="HAMAP-Rule" id="MF_02006"/>
    </source>
</evidence>
<organism>
    <name type="scientific">Desulfitobacterium hafniense (strain DSM 10664 / DCB-2)</name>
    <dbReference type="NCBI Taxonomy" id="272564"/>
    <lineage>
        <taxon>Bacteria</taxon>
        <taxon>Bacillati</taxon>
        <taxon>Bacillota</taxon>
        <taxon>Clostridia</taxon>
        <taxon>Eubacteriales</taxon>
        <taxon>Desulfitobacteriaceae</taxon>
        <taxon>Desulfitobacterium</taxon>
    </lineage>
</organism>
<keyword id="KW-0030">Aminoacyl-tRNA synthetase</keyword>
<keyword id="KW-0067">ATP-binding</keyword>
<keyword id="KW-0963">Cytoplasm</keyword>
<keyword id="KW-0436">Ligase</keyword>
<keyword id="KW-0547">Nucleotide-binding</keyword>
<keyword id="KW-0648">Protein biosynthesis</keyword>
<keyword id="KW-0694">RNA-binding</keyword>
<sequence>MNILDDLKARGLVYQTTDEEALYKRLESPMTLYCGFDPTADSLHIGHLLPVLMLRRFQLAGHCPIALVGGGTGLIGDPSGKTSERTLNPTEVVQEWANRIKEQLSCFLDFEGVGNPAIMANNYEWLGTINVIEFLRDIGKNFSLGSMLAKESVESRMSRGISFTEFSYQILQSYDFLKLNELYGCEMQIGGSDQWGNITSGTDLIRRMSVGEDRQVHGLTVPLVTKSDGTKFGKTEGGAVWLDPDKTSPYKFYQFWINTDDRDVVKYLNFFTFLSIEEIQGLAQEVESQPEKRNAQRMLAKEVTELVHGVEARERAEKISQALFTGGIANLTAKEVEEGFSDVPSADVEDQEMLLVDALIKVGAVSSRRQARESMESGAVYVNGIRQTDTTLTVAQLDKIESRFIVIRRGKKNYYLVKLV</sequence>
<comment type="function">
    <text evidence="1">Catalyzes the attachment of tyrosine to tRNA(Tyr) in a two-step reaction: tyrosine is first activated by ATP to form Tyr-AMP and then transferred to the acceptor end of tRNA(Tyr).</text>
</comment>
<comment type="catalytic activity">
    <reaction evidence="1">
        <text>tRNA(Tyr) + L-tyrosine + ATP = L-tyrosyl-tRNA(Tyr) + AMP + diphosphate + H(+)</text>
        <dbReference type="Rhea" id="RHEA:10220"/>
        <dbReference type="Rhea" id="RHEA-COMP:9706"/>
        <dbReference type="Rhea" id="RHEA-COMP:9707"/>
        <dbReference type="ChEBI" id="CHEBI:15378"/>
        <dbReference type="ChEBI" id="CHEBI:30616"/>
        <dbReference type="ChEBI" id="CHEBI:33019"/>
        <dbReference type="ChEBI" id="CHEBI:58315"/>
        <dbReference type="ChEBI" id="CHEBI:78442"/>
        <dbReference type="ChEBI" id="CHEBI:78536"/>
        <dbReference type="ChEBI" id="CHEBI:456215"/>
        <dbReference type="EC" id="6.1.1.1"/>
    </reaction>
</comment>
<comment type="subunit">
    <text evidence="1">Homodimer.</text>
</comment>
<comment type="subcellular location">
    <subcellularLocation>
        <location evidence="1">Cytoplasm</location>
    </subcellularLocation>
</comment>
<comment type="similarity">
    <text evidence="1">Belongs to the class-I aminoacyl-tRNA synthetase family. TyrS type 1 subfamily.</text>
</comment>
<accession>B8G0N6</accession>
<gene>
    <name evidence="1" type="primary">tyrS</name>
    <name type="ordered locus">Dhaf_0237</name>
</gene>
<reference key="1">
    <citation type="journal article" date="2012" name="BMC Microbiol.">
        <title>Genome sequence of Desulfitobacterium hafniense DCB-2, a Gram-positive anaerobe capable of dehalogenation and metal reduction.</title>
        <authorList>
            <person name="Kim S.H."/>
            <person name="Harzman C."/>
            <person name="Davis J.K."/>
            <person name="Hutcheson R."/>
            <person name="Broderick J.B."/>
            <person name="Marsh T.L."/>
            <person name="Tiedje J.M."/>
        </authorList>
    </citation>
    <scope>NUCLEOTIDE SEQUENCE [LARGE SCALE GENOMIC DNA]</scope>
    <source>
        <strain>DSM 10664 / DCB-2</strain>
    </source>
</reference>
<proteinExistence type="inferred from homology"/>
<feature type="chain" id="PRO_1000216270" description="Tyrosine--tRNA ligase">
    <location>
        <begin position="1"/>
        <end position="420"/>
    </location>
</feature>
<feature type="domain" description="S4 RNA-binding" evidence="1">
    <location>
        <begin position="353"/>
        <end position="419"/>
    </location>
</feature>
<feature type="short sequence motif" description="'HIGH' region">
    <location>
        <begin position="38"/>
        <end position="47"/>
    </location>
</feature>
<feature type="short sequence motif" description="'KMSKS' region">
    <location>
        <begin position="231"/>
        <end position="235"/>
    </location>
</feature>
<feature type="binding site" evidence="1">
    <location>
        <position position="33"/>
    </location>
    <ligand>
        <name>L-tyrosine</name>
        <dbReference type="ChEBI" id="CHEBI:58315"/>
    </ligand>
</feature>
<feature type="binding site" evidence="1">
    <location>
        <position position="168"/>
    </location>
    <ligand>
        <name>L-tyrosine</name>
        <dbReference type="ChEBI" id="CHEBI:58315"/>
    </ligand>
</feature>
<feature type="binding site" evidence="1">
    <location>
        <position position="172"/>
    </location>
    <ligand>
        <name>L-tyrosine</name>
        <dbReference type="ChEBI" id="CHEBI:58315"/>
    </ligand>
</feature>
<feature type="binding site" evidence="1">
    <location>
        <position position="234"/>
    </location>
    <ligand>
        <name>ATP</name>
        <dbReference type="ChEBI" id="CHEBI:30616"/>
    </ligand>
</feature>
<dbReference type="EC" id="6.1.1.1" evidence="1"/>
<dbReference type="EMBL" id="CP001336">
    <property type="protein sequence ID" value="ACL18305.1"/>
    <property type="molecule type" value="Genomic_DNA"/>
</dbReference>
<dbReference type="RefSeq" id="WP_015942640.1">
    <property type="nucleotide sequence ID" value="NC_011830.1"/>
</dbReference>
<dbReference type="SMR" id="B8G0N6"/>
<dbReference type="KEGG" id="dhd:Dhaf_0237"/>
<dbReference type="HOGENOM" id="CLU_024003_0_3_9"/>
<dbReference type="Proteomes" id="UP000007726">
    <property type="component" value="Chromosome"/>
</dbReference>
<dbReference type="GO" id="GO:0005829">
    <property type="term" value="C:cytosol"/>
    <property type="evidence" value="ECO:0007669"/>
    <property type="project" value="TreeGrafter"/>
</dbReference>
<dbReference type="GO" id="GO:0005524">
    <property type="term" value="F:ATP binding"/>
    <property type="evidence" value="ECO:0007669"/>
    <property type="project" value="UniProtKB-UniRule"/>
</dbReference>
<dbReference type="GO" id="GO:0003723">
    <property type="term" value="F:RNA binding"/>
    <property type="evidence" value="ECO:0007669"/>
    <property type="project" value="UniProtKB-KW"/>
</dbReference>
<dbReference type="GO" id="GO:0004831">
    <property type="term" value="F:tyrosine-tRNA ligase activity"/>
    <property type="evidence" value="ECO:0007669"/>
    <property type="project" value="UniProtKB-UniRule"/>
</dbReference>
<dbReference type="GO" id="GO:0006437">
    <property type="term" value="P:tyrosyl-tRNA aminoacylation"/>
    <property type="evidence" value="ECO:0007669"/>
    <property type="project" value="UniProtKB-UniRule"/>
</dbReference>
<dbReference type="CDD" id="cd00165">
    <property type="entry name" value="S4"/>
    <property type="match status" value="1"/>
</dbReference>
<dbReference type="CDD" id="cd00805">
    <property type="entry name" value="TyrRS_core"/>
    <property type="match status" value="1"/>
</dbReference>
<dbReference type="FunFam" id="1.10.240.10:FF:000001">
    <property type="entry name" value="Tyrosine--tRNA ligase"/>
    <property type="match status" value="1"/>
</dbReference>
<dbReference type="FunFam" id="3.40.50.620:FF:000008">
    <property type="entry name" value="Tyrosine--tRNA ligase"/>
    <property type="match status" value="1"/>
</dbReference>
<dbReference type="Gene3D" id="3.40.50.620">
    <property type="entry name" value="HUPs"/>
    <property type="match status" value="1"/>
</dbReference>
<dbReference type="Gene3D" id="3.10.290.10">
    <property type="entry name" value="RNA-binding S4 domain"/>
    <property type="match status" value="1"/>
</dbReference>
<dbReference type="Gene3D" id="1.10.240.10">
    <property type="entry name" value="Tyrosyl-Transfer RNA Synthetase"/>
    <property type="match status" value="1"/>
</dbReference>
<dbReference type="HAMAP" id="MF_02006">
    <property type="entry name" value="Tyr_tRNA_synth_type1"/>
    <property type="match status" value="1"/>
</dbReference>
<dbReference type="InterPro" id="IPR001412">
    <property type="entry name" value="aa-tRNA-synth_I_CS"/>
</dbReference>
<dbReference type="InterPro" id="IPR002305">
    <property type="entry name" value="aa-tRNA-synth_Ic"/>
</dbReference>
<dbReference type="InterPro" id="IPR014729">
    <property type="entry name" value="Rossmann-like_a/b/a_fold"/>
</dbReference>
<dbReference type="InterPro" id="IPR002942">
    <property type="entry name" value="S4_RNA-bd"/>
</dbReference>
<dbReference type="InterPro" id="IPR036986">
    <property type="entry name" value="S4_RNA-bd_sf"/>
</dbReference>
<dbReference type="InterPro" id="IPR054608">
    <property type="entry name" value="SYY-like_C"/>
</dbReference>
<dbReference type="InterPro" id="IPR002307">
    <property type="entry name" value="Tyr-tRNA-ligase"/>
</dbReference>
<dbReference type="InterPro" id="IPR024088">
    <property type="entry name" value="Tyr-tRNA-ligase_bac-type"/>
</dbReference>
<dbReference type="InterPro" id="IPR024107">
    <property type="entry name" value="Tyr-tRNA-ligase_bac_1"/>
</dbReference>
<dbReference type="NCBIfam" id="TIGR00234">
    <property type="entry name" value="tyrS"/>
    <property type="match status" value="1"/>
</dbReference>
<dbReference type="PANTHER" id="PTHR11766:SF0">
    <property type="entry name" value="TYROSINE--TRNA LIGASE, MITOCHONDRIAL"/>
    <property type="match status" value="1"/>
</dbReference>
<dbReference type="PANTHER" id="PTHR11766">
    <property type="entry name" value="TYROSYL-TRNA SYNTHETASE"/>
    <property type="match status" value="1"/>
</dbReference>
<dbReference type="Pfam" id="PF22421">
    <property type="entry name" value="SYY_C-terminal"/>
    <property type="match status" value="1"/>
</dbReference>
<dbReference type="Pfam" id="PF00579">
    <property type="entry name" value="tRNA-synt_1b"/>
    <property type="match status" value="1"/>
</dbReference>
<dbReference type="PRINTS" id="PR01040">
    <property type="entry name" value="TRNASYNTHTYR"/>
</dbReference>
<dbReference type="SMART" id="SM00363">
    <property type="entry name" value="S4"/>
    <property type="match status" value="1"/>
</dbReference>
<dbReference type="SUPFAM" id="SSF55174">
    <property type="entry name" value="Alpha-L RNA-binding motif"/>
    <property type="match status" value="1"/>
</dbReference>
<dbReference type="SUPFAM" id="SSF52374">
    <property type="entry name" value="Nucleotidylyl transferase"/>
    <property type="match status" value="1"/>
</dbReference>
<dbReference type="PROSITE" id="PS00178">
    <property type="entry name" value="AA_TRNA_LIGASE_I"/>
    <property type="match status" value="1"/>
</dbReference>
<dbReference type="PROSITE" id="PS50889">
    <property type="entry name" value="S4"/>
    <property type="match status" value="1"/>
</dbReference>
<name>SYY_DESHD</name>